<reference key="1">
    <citation type="journal article" date="1997" name="Nature">
        <title>Genomic sequence of a Lyme disease spirochaete, Borrelia burgdorferi.</title>
        <authorList>
            <person name="Fraser C.M."/>
            <person name="Casjens S."/>
            <person name="Huang W.M."/>
            <person name="Sutton G.G."/>
            <person name="Clayton R.A."/>
            <person name="Lathigra R."/>
            <person name="White O."/>
            <person name="Ketchum K.A."/>
            <person name="Dodson R.J."/>
            <person name="Hickey E.K."/>
            <person name="Gwinn M.L."/>
            <person name="Dougherty B.A."/>
            <person name="Tomb J.-F."/>
            <person name="Fleischmann R.D."/>
            <person name="Richardson D.L."/>
            <person name="Peterson J.D."/>
            <person name="Kerlavage A.R."/>
            <person name="Quackenbush J."/>
            <person name="Salzberg S.L."/>
            <person name="Hanson M."/>
            <person name="van Vugt R."/>
            <person name="Palmer N."/>
            <person name="Adams M.D."/>
            <person name="Gocayne J.D."/>
            <person name="Weidman J.F."/>
            <person name="Utterback T.R."/>
            <person name="Watthey L."/>
            <person name="McDonald L.A."/>
            <person name="Artiach P."/>
            <person name="Bowman C."/>
            <person name="Garland S.A."/>
            <person name="Fujii C."/>
            <person name="Cotton M.D."/>
            <person name="Horst K."/>
            <person name="Roberts K.M."/>
            <person name="Hatch B."/>
            <person name="Smith H.O."/>
            <person name="Venter J.C."/>
        </authorList>
    </citation>
    <scope>NUCLEOTIDE SEQUENCE [LARGE SCALE GENOMIC DNA]</scope>
    <source>
        <strain>ATCC 35210 / DSM 4680 / CIP 102532 / B31</strain>
    </source>
</reference>
<reference key="2">
    <citation type="submission" date="1997-01" db="EMBL/GenBank/DDBJ databases">
        <title>Phenylalanyl-tRNA synthetase genes (alpha and beta subunits) and thioredoxin reductase gene of Borrelia burgdorferi.</title>
        <authorList>
            <person name="Barbour A.G."/>
            <person name="Hinnebusch J."/>
        </authorList>
    </citation>
    <scope>NUCLEOTIDE SEQUENCE [GENOMIC DNA] OF 6-418</scope>
    <source>
        <strain>ATCC 35210 / DSM 4680 / CIP 102532 / B31</strain>
    </source>
</reference>
<gene>
    <name evidence="1" type="primary">pheS</name>
    <name type="ordered locus">BB_0513</name>
</gene>
<sequence length="528" mass="59952">MKVIFMKADLNLIKTLHPLEIKVIVNNEEEDDISASIIIEKLGFNEGQANKTIEWLNSKGIIEEIYRKLNVFYKATERGLGALRDGFVEEKIINLVSQKAVLASNLALELDIDVKEVRKAFGNLLKEGILSLDLDKQIIINCLDGTETNYQKVRVLLERAKNSDLLRESLTTEELLLISNFAKKKGADSVFFKIIEKLDLKFRLSSFGLEVKNFLMKSKLTGDELTKLTPEILKNKTYENKKFRAYNIHIPSAKTFIGRANSYLDYISKIKDKLVGLGFQEFDGPLVETEFFNNDALFMPQFHPSRDIKDVYYISDPSMQESLPEPYFSNVKLAHETGYATGSRGWRYSFSEDLSKRLVLRTHGTVLSAKQLINAKNPSRYFGVIRCFRYDQVDATHGVDFYQTEGIVIEDGVSIKTLLGLLEIFAKELAGATEIKYVPAYFPFTEPSIEIHVKHPVLGWFELGGSGIFRPEVTKPLGIDLPVIAWGIGIDRMALMHLGLNDLRDLFTYDIGDVILRRGKIDAKVRNL</sequence>
<protein>
    <recommendedName>
        <fullName evidence="1">Phenylalanine--tRNA ligase alpha subunit</fullName>
        <ecNumber evidence="1">6.1.1.20</ecNumber>
    </recommendedName>
    <alternativeName>
        <fullName evidence="1">Phenylalanyl-tRNA synthetase alpha subunit</fullName>
        <shortName evidence="1">PheRS</shortName>
    </alternativeName>
</protein>
<evidence type="ECO:0000255" key="1">
    <source>
        <dbReference type="HAMAP-Rule" id="MF_00282"/>
    </source>
</evidence>
<evidence type="ECO:0000305" key="2"/>
<comment type="catalytic activity">
    <reaction evidence="1">
        <text>tRNA(Phe) + L-phenylalanine + ATP = L-phenylalanyl-tRNA(Phe) + AMP + diphosphate + H(+)</text>
        <dbReference type="Rhea" id="RHEA:19413"/>
        <dbReference type="Rhea" id="RHEA-COMP:9668"/>
        <dbReference type="Rhea" id="RHEA-COMP:9699"/>
        <dbReference type="ChEBI" id="CHEBI:15378"/>
        <dbReference type="ChEBI" id="CHEBI:30616"/>
        <dbReference type="ChEBI" id="CHEBI:33019"/>
        <dbReference type="ChEBI" id="CHEBI:58095"/>
        <dbReference type="ChEBI" id="CHEBI:78442"/>
        <dbReference type="ChEBI" id="CHEBI:78531"/>
        <dbReference type="ChEBI" id="CHEBI:456215"/>
        <dbReference type="EC" id="6.1.1.20"/>
    </reaction>
</comment>
<comment type="cofactor">
    <cofactor evidence="1">
        <name>Mg(2+)</name>
        <dbReference type="ChEBI" id="CHEBI:18420"/>
    </cofactor>
    <text evidence="1">Binds 2 magnesium ions per tetramer.</text>
</comment>
<comment type="subunit">
    <text evidence="1">Tetramer of two alpha and two beta subunits.</text>
</comment>
<comment type="subcellular location">
    <subcellularLocation>
        <location evidence="1">Cytoplasm</location>
    </subcellularLocation>
</comment>
<comment type="similarity">
    <text evidence="1">Belongs to the class-II aminoacyl-tRNA synthetase family. Phe-tRNA synthetase alpha subunit type 2 subfamily.</text>
</comment>
<accession>P94282</accession>
<accession>O51466</accession>
<dbReference type="EC" id="6.1.1.20" evidence="1"/>
<dbReference type="EMBL" id="AE000783">
    <property type="status" value="NOT_ANNOTATED_CDS"/>
    <property type="molecule type" value="Genomic_DNA"/>
</dbReference>
<dbReference type="EMBL" id="U82978">
    <property type="protein sequence ID" value="AAB41018.1"/>
    <property type="molecule type" value="Genomic_DNA"/>
</dbReference>
<dbReference type="PIR" id="H70163">
    <property type="entry name" value="H70163"/>
</dbReference>
<dbReference type="RefSeq" id="YP_008686579.1">
    <property type="nucleotide sequence ID" value="NC_001318.1"/>
</dbReference>
<dbReference type="SMR" id="P94282"/>
<dbReference type="PATRIC" id="fig|224326.49.peg.904"/>
<dbReference type="OrthoDB" id="9800719at2"/>
<dbReference type="Proteomes" id="UP000001807">
    <property type="component" value="Chromosome"/>
</dbReference>
<dbReference type="GO" id="GO:0005737">
    <property type="term" value="C:cytoplasm"/>
    <property type="evidence" value="ECO:0007669"/>
    <property type="project" value="UniProtKB-SubCell"/>
</dbReference>
<dbReference type="GO" id="GO:0005524">
    <property type="term" value="F:ATP binding"/>
    <property type="evidence" value="ECO:0007669"/>
    <property type="project" value="UniProtKB-UniRule"/>
</dbReference>
<dbReference type="GO" id="GO:0000287">
    <property type="term" value="F:magnesium ion binding"/>
    <property type="evidence" value="ECO:0007669"/>
    <property type="project" value="UniProtKB-UniRule"/>
</dbReference>
<dbReference type="GO" id="GO:0004826">
    <property type="term" value="F:phenylalanine-tRNA ligase activity"/>
    <property type="evidence" value="ECO:0007669"/>
    <property type="project" value="UniProtKB-UniRule"/>
</dbReference>
<dbReference type="GO" id="GO:0000049">
    <property type="term" value="F:tRNA binding"/>
    <property type="evidence" value="ECO:0007669"/>
    <property type="project" value="InterPro"/>
</dbReference>
<dbReference type="GO" id="GO:0006432">
    <property type="term" value="P:phenylalanyl-tRNA aminoacylation"/>
    <property type="evidence" value="ECO:0007669"/>
    <property type="project" value="UniProtKB-UniRule"/>
</dbReference>
<dbReference type="CDD" id="cd00496">
    <property type="entry name" value="PheRS_alpha_core"/>
    <property type="match status" value="1"/>
</dbReference>
<dbReference type="Gene3D" id="3.30.930.10">
    <property type="entry name" value="Bira Bifunctional Protein, Domain 2"/>
    <property type="match status" value="1"/>
</dbReference>
<dbReference type="HAMAP" id="MF_00282">
    <property type="entry name" value="Phe_tRNA_synth_alpha2"/>
    <property type="match status" value="1"/>
</dbReference>
<dbReference type="InterPro" id="IPR006195">
    <property type="entry name" value="aa-tRNA-synth_II"/>
</dbReference>
<dbReference type="InterPro" id="IPR045864">
    <property type="entry name" value="aa-tRNA-synth_II/BPL/LPL"/>
</dbReference>
<dbReference type="InterPro" id="IPR004529">
    <property type="entry name" value="Phe-tRNA-synth_IIc_asu"/>
</dbReference>
<dbReference type="InterPro" id="IPR022917">
    <property type="entry name" value="Phe_tRNA_ligase_alpha_bac/arc"/>
</dbReference>
<dbReference type="InterPro" id="IPR002319">
    <property type="entry name" value="Phenylalanyl-tRNA_Synthase"/>
</dbReference>
<dbReference type="NCBIfam" id="TIGR00468">
    <property type="entry name" value="pheS"/>
    <property type="match status" value="1"/>
</dbReference>
<dbReference type="NCBIfam" id="NF003210">
    <property type="entry name" value="PRK04172.1"/>
    <property type="match status" value="1"/>
</dbReference>
<dbReference type="PANTHER" id="PTHR11538:SF40">
    <property type="entry name" value="PHENYLALANINE--TRNA LIGASE ALPHA SUBUNIT"/>
    <property type="match status" value="1"/>
</dbReference>
<dbReference type="PANTHER" id="PTHR11538">
    <property type="entry name" value="PHENYLALANYL-TRNA SYNTHETASE"/>
    <property type="match status" value="1"/>
</dbReference>
<dbReference type="Pfam" id="PF01409">
    <property type="entry name" value="tRNA-synt_2d"/>
    <property type="match status" value="1"/>
</dbReference>
<dbReference type="SUPFAM" id="SSF55681">
    <property type="entry name" value="Class II aaRS and biotin synthetases"/>
    <property type="match status" value="1"/>
</dbReference>
<dbReference type="PROSITE" id="PS50862">
    <property type="entry name" value="AA_TRNA_LIGASE_II"/>
    <property type="match status" value="1"/>
</dbReference>
<name>SYFA_BORBU</name>
<organism>
    <name type="scientific">Borreliella burgdorferi (strain ATCC 35210 / DSM 4680 / CIP 102532 / B31)</name>
    <name type="common">Borrelia burgdorferi</name>
    <dbReference type="NCBI Taxonomy" id="224326"/>
    <lineage>
        <taxon>Bacteria</taxon>
        <taxon>Pseudomonadati</taxon>
        <taxon>Spirochaetota</taxon>
        <taxon>Spirochaetia</taxon>
        <taxon>Spirochaetales</taxon>
        <taxon>Borreliaceae</taxon>
        <taxon>Borreliella</taxon>
    </lineage>
</organism>
<feature type="chain" id="PRO_0000126804" description="Phenylalanine--tRNA ligase alpha subunit">
    <location>
        <begin position="1"/>
        <end position="528"/>
    </location>
</feature>
<feature type="binding site" evidence="1">
    <location>
        <position position="365"/>
    </location>
    <ligand>
        <name>L-phenylalanine</name>
        <dbReference type="ChEBI" id="CHEBI:58095"/>
    </ligand>
</feature>
<feature type="binding site" evidence="1">
    <location>
        <position position="444"/>
    </location>
    <ligand>
        <name>L-phenylalanine</name>
        <dbReference type="ChEBI" id="CHEBI:58095"/>
    </ligand>
</feature>
<feature type="binding site" evidence="1">
    <location>
        <position position="446"/>
    </location>
    <ligand>
        <name>Mg(2+)</name>
        <dbReference type="ChEBI" id="CHEBI:18420"/>
        <note>shared with beta subunit</note>
    </ligand>
</feature>
<feature type="binding site" evidence="1">
    <location>
        <position position="469"/>
    </location>
    <ligand>
        <name>L-phenylalanine</name>
        <dbReference type="ChEBI" id="CHEBI:58095"/>
    </ligand>
</feature>
<feature type="sequence conflict" description="In Ref. 2; AAB41018." evidence="2" ref="2">
    <original>T</original>
    <variation>S</variation>
    <location>
        <position position="146"/>
    </location>
</feature>
<feature type="sequence conflict" description="In Ref. 2." evidence="2" ref="2">
    <original>IVIEDGVSIKTL</original>
    <variation>LLLRMVLALKLC</variation>
    <location>
        <begin position="407"/>
        <end position="418"/>
    </location>
</feature>
<proteinExistence type="inferred from homology"/>
<keyword id="KW-0030">Aminoacyl-tRNA synthetase</keyword>
<keyword id="KW-0067">ATP-binding</keyword>
<keyword id="KW-0963">Cytoplasm</keyword>
<keyword id="KW-0436">Ligase</keyword>
<keyword id="KW-0460">Magnesium</keyword>
<keyword id="KW-0479">Metal-binding</keyword>
<keyword id="KW-0547">Nucleotide-binding</keyword>
<keyword id="KW-0648">Protein biosynthesis</keyword>
<keyword id="KW-1185">Reference proteome</keyword>